<name>GCS2_MYCSS</name>
<proteinExistence type="inferred from homology"/>
<dbReference type="EC" id="6.3.2.2" evidence="1"/>
<dbReference type="EMBL" id="CP000384">
    <property type="protein sequence ID" value="ABG06694.1"/>
    <property type="molecule type" value="Genomic_DNA"/>
</dbReference>
<dbReference type="SMR" id="Q1BEJ0"/>
<dbReference type="KEGG" id="mmc:Mmcs_0573"/>
<dbReference type="HOGENOM" id="CLU_044848_1_0_11"/>
<dbReference type="BioCyc" id="MSP164756:G1G6O-585-MONOMER"/>
<dbReference type="GO" id="GO:0005524">
    <property type="term" value="F:ATP binding"/>
    <property type="evidence" value="ECO:0007669"/>
    <property type="project" value="UniProtKB-KW"/>
</dbReference>
<dbReference type="GO" id="GO:0004357">
    <property type="term" value="F:glutamate-cysteine ligase activity"/>
    <property type="evidence" value="ECO:0007669"/>
    <property type="project" value="UniProtKB-EC"/>
</dbReference>
<dbReference type="GO" id="GO:0042398">
    <property type="term" value="P:modified amino acid biosynthetic process"/>
    <property type="evidence" value="ECO:0007669"/>
    <property type="project" value="InterPro"/>
</dbReference>
<dbReference type="Gene3D" id="3.30.590.20">
    <property type="match status" value="1"/>
</dbReference>
<dbReference type="HAMAP" id="MF_01609">
    <property type="entry name" value="Glu_cys_ligase_2"/>
    <property type="match status" value="1"/>
</dbReference>
<dbReference type="InterPro" id="IPR050141">
    <property type="entry name" value="GCL_type2/YbdK_subfam"/>
</dbReference>
<dbReference type="InterPro" id="IPR006336">
    <property type="entry name" value="GCS2"/>
</dbReference>
<dbReference type="InterPro" id="IPR014746">
    <property type="entry name" value="Gln_synth/guanido_kin_cat_dom"/>
</dbReference>
<dbReference type="InterPro" id="IPR011793">
    <property type="entry name" value="YbdK"/>
</dbReference>
<dbReference type="NCBIfam" id="TIGR02050">
    <property type="entry name" value="gshA_cyan_rel"/>
    <property type="match status" value="1"/>
</dbReference>
<dbReference type="NCBIfam" id="NF010042">
    <property type="entry name" value="PRK13517.1-2"/>
    <property type="match status" value="1"/>
</dbReference>
<dbReference type="NCBIfam" id="NF010043">
    <property type="entry name" value="PRK13517.1-3"/>
    <property type="match status" value="1"/>
</dbReference>
<dbReference type="NCBIfam" id="NF010044">
    <property type="entry name" value="PRK13517.1-4"/>
    <property type="match status" value="1"/>
</dbReference>
<dbReference type="PANTHER" id="PTHR36510">
    <property type="entry name" value="GLUTAMATE--CYSTEINE LIGASE 2-RELATED"/>
    <property type="match status" value="1"/>
</dbReference>
<dbReference type="PANTHER" id="PTHR36510:SF1">
    <property type="entry name" value="GLUTAMATE--CYSTEINE LIGASE 2-RELATED"/>
    <property type="match status" value="1"/>
</dbReference>
<dbReference type="Pfam" id="PF04107">
    <property type="entry name" value="GCS2"/>
    <property type="match status" value="1"/>
</dbReference>
<dbReference type="SUPFAM" id="SSF55931">
    <property type="entry name" value="Glutamine synthetase/guanido kinase"/>
    <property type="match status" value="1"/>
</dbReference>
<sequence>MLSVPASSRIDFAGSPRPTVGVEWEFALVDAHTRDLSNEAATVIAEIGETPHVHKELLRNTVEVVTGICENTGEAMADLHDTLKVVRRIVRDRGMELFCAGTHPFANWSTQQLTDAPRYAELIKRTQWWGRQMLIWGVHVHVGISSAHKVMPIISSLLNQYPHLLALSASSPYWDGSDTGYASNRAMMFQQLPTAGLPFQFQSWPEFERFVHDQKKTGIIDHMNEIRWDIRPSPHLGTVEIRVFDGVSNIAELGSLVALTHCLVVDLDRRLDAGEQLPVMPPWHVQENKWRAARYGLDAEIILDADSNERLVTEDLDDLLTRLQPVARSLDCADELAGVAEIYRHGASYQRQRRVAEEHDGDLLAVVDALVAELEL</sequence>
<protein>
    <recommendedName>
        <fullName evidence="1">Putative glutamate--cysteine ligase 2</fullName>
        <ecNumber evidence="1">6.3.2.2</ecNumber>
    </recommendedName>
    <alternativeName>
        <fullName evidence="1">Gamma-glutamylcysteine synthetase 2</fullName>
        <shortName evidence="1">GCS 2</shortName>
        <shortName evidence="1">Gamma-GCS 2</shortName>
    </alternativeName>
</protein>
<accession>Q1BEJ0</accession>
<keyword id="KW-0067">ATP-binding</keyword>
<keyword id="KW-0436">Ligase</keyword>
<keyword id="KW-0547">Nucleotide-binding</keyword>
<gene>
    <name type="ordered locus">Mmcs_0573</name>
</gene>
<organism>
    <name type="scientific">Mycobacterium sp. (strain MCS)</name>
    <dbReference type="NCBI Taxonomy" id="164756"/>
    <lineage>
        <taxon>Bacteria</taxon>
        <taxon>Bacillati</taxon>
        <taxon>Actinomycetota</taxon>
        <taxon>Actinomycetes</taxon>
        <taxon>Mycobacteriales</taxon>
        <taxon>Mycobacteriaceae</taxon>
        <taxon>Mycobacterium</taxon>
    </lineage>
</organism>
<reference key="1">
    <citation type="submission" date="2006-06" db="EMBL/GenBank/DDBJ databases">
        <title>Complete sequence of chromosome of Mycobacterium sp. MCS.</title>
        <authorList>
            <consortium name="US DOE Joint Genome Institute"/>
            <person name="Copeland A."/>
            <person name="Lucas S."/>
            <person name="Lapidus A."/>
            <person name="Barry K."/>
            <person name="Detter J.C."/>
            <person name="Glavina del Rio T."/>
            <person name="Hammon N."/>
            <person name="Israni S."/>
            <person name="Dalin E."/>
            <person name="Tice H."/>
            <person name="Pitluck S."/>
            <person name="Martinez M."/>
            <person name="Schmutz J."/>
            <person name="Larimer F."/>
            <person name="Land M."/>
            <person name="Hauser L."/>
            <person name="Kyrpides N."/>
            <person name="Kim E."/>
            <person name="Miller C.D."/>
            <person name="Hughes J.E."/>
            <person name="Anderson A.J."/>
            <person name="Sims R.C."/>
            <person name="Richardson P."/>
        </authorList>
    </citation>
    <scope>NUCLEOTIDE SEQUENCE [LARGE SCALE GENOMIC DNA]</scope>
    <source>
        <strain>MCS</strain>
    </source>
</reference>
<evidence type="ECO:0000255" key="1">
    <source>
        <dbReference type="HAMAP-Rule" id="MF_01609"/>
    </source>
</evidence>
<feature type="chain" id="PRO_0000291499" description="Putative glutamate--cysteine ligase 2">
    <location>
        <begin position="1"/>
        <end position="376"/>
    </location>
</feature>
<comment type="function">
    <text evidence="1">ATP-dependent carboxylate-amine ligase which exhibits weak glutamate--cysteine ligase activity.</text>
</comment>
<comment type="catalytic activity">
    <reaction evidence="1">
        <text>L-cysteine + L-glutamate + ATP = gamma-L-glutamyl-L-cysteine + ADP + phosphate + H(+)</text>
        <dbReference type="Rhea" id="RHEA:13285"/>
        <dbReference type="ChEBI" id="CHEBI:15378"/>
        <dbReference type="ChEBI" id="CHEBI:29985"/>
        <dbReference type="ChEBI" id="CHEBI:30616"/>
        <dbReference type="ChEBI" id="CHEBI:35235"/>
        <dbReference type="ChEBI" id="CHEBI:43474"/>
        <dbReference type="ChEBI" id="CHEBI:58173"/>
        <dbReference type="ChEBI" id="CHEBI:456216"/>
        <dbReference type="EC" id="6.3.2.2"/>
    </reaction>
</comment>
<comment type="similarity">
    <text evidence="1">Belongs to the glutamate--cysteine ligase type 2 family. YbdK subfamily.</text>
</comment>